<name>CO2A1_BOVIN</name>
<dbReference type="EMBL" id="AAFC03017082">
    <property type="status" value="NOT_ANNOTATED_CDS"/>
    <property type="molecule type" value="Genomic_DNA"/>
</dbReference>
<dbReference type="EMBL" id="AAFC03017085">
    <property type="status" value="NOT_ANNOTATED_CDS"/>
    <property type="molecule type" value="Genomic_DNA"/>
</dbReference>
<dbReference type="EMBL" id="AAFC03056593">
    <property type="status" value="NOT_ANNOTATED_CDS"/>
    <property type="molecule type" value="Genomic_DNA"/>
</dbReference>
<dbReference type="EMBL" id="L28918">
    <property type="protein sequence ID" value="AAA30436.2"/>
    <property type="molecule type" value="mRNA"/>
</dbReference>
<dbReference type="EMBL" id="AF138883">
    <property type="protein sequence ID" value="AAD42346.1"/>
    <property type="molecule type" value="mRNA"/>
</dbReference>
<dbReference type="EMBL" id="AF138957">
    <property type="protein sequence ID" value="AAD42347.1"/>
    <property type="molecule type" value="mRNA"/>
</dbReference>
<dbReference type="EMBL" id="X02420">
    <property type="protein sequence ID" value="CAA26269.1"/>
    <property type="molecule type" value="mRNA"/>
</dbReference>
<dbReference type="PIR" id="A90369">
    <property type="entry name" value="CGBO6C"/>
</dbReference>
<dbReference type="PIR" id="I45876">
    <property type="entry name" value="I45876"/>
</dbReference>
<dbReference type="RefSeq" id="NP_001001135.2">
    <property type="nucleotide sequence ID" value="NM_001001135.3"/>
</dbReference>
<dbReference type="PCDDB" id="P02459"/>
<dbReference type="SMR" id="P02459"/>
<dbReference type="ComplexPortal" id="CPX-3105">
    <property type="entry name" value="Collagen type II trimer"/>
</dbReference>
<dbReference type="ComplexPortal" id="CPX-3108">
    <property type="entry name" value="Collagen type XI trimer variant 1"/>
</dbReference>
<dbReference type="FunCoup" id="P02459">
    <property type="interactions" value="548"/>
</dbReference>
<dbReference type="IntAct" id="P02459">
    <property type="interactions" value="3"/>
</dbReference>
<dbReference type="STRING" id="9913.ENSBTAP00000017505"/>
<dbReference type="GlyCosmos" id="P02459">
    <property type="glycosylation" value="9 sites, No reported glycans"/>
</dbReference>
<dbReference type="GlyGen" id="P02459">
    <property type="glycosylation" value="9 sites"/>
</dbReference>
<dbReference type="PaxDb" id="9913-ENSBTAP00000017505"/>
<dbReference type="ABCD" id="P02459">
    <property type="antibodies" value="5 sequenced antibodies"/>
</dbReference>
<dbReference type="Ensembl" id="ENSBTAT00000017505.6">
    <property type="protein sequence ID" value="ENSBTAP00000017505.5"/>
    <property type="gene ID" value="ENSBTAG00000013155.7"/>
</dbReference>
<dbReference type="GeneID" id="407142"/>
<dbReference type="KEGG" id="bta:407142"/>
<dbReference type="CTD" id="1280"/>
<dbReference type="VEuPathDB" id="HostDB:ENSBTAG00000013155"/>
<dbReference type="VGNC" id="VGNC:27564">
    <property type="gene designation" value="COL2A1"/>
</dbReference>
<dbReference type="eggNOG" id="KOG3544">
    <property type="taxonomic scope" value="Eukaryota"/>
</dbReference>
<dbReference type="GeneTree" id="ENSGT00940000155224"/>
<dbReference type="InParanoid" id="P02459"/>
<dbReference type="OMA" id="EAGRHQH"/>
<dbReference type="OrthoDB" id="8939548at2759"/>
<dbReference type="TreeFam" id="TF344135"/>
<dbReference type="Reactome" id="R-BTA-1442490">
    <property type="pathway name" value="Collagen degradation"/>
</dbReference>
<dbReference type="Reactome" id="R-BTA-1474244">
    <property type="pathway name" value="Extracellular matrix organization"/>
</dbReference>
<dbReference type="Reactome" id="R-BTA-1650814">
    <property type="pathway name" value="Collagen biosynthesis and modifying enzymes"/>
</dbReference>
<dbReference type="Reactome" id="R-BTA-186797">
    <property type="pathway name" value="Signaling by PDGF"/>
</dbReference>
<dbReference type="Reactome" id="R-BTA-198933">
    <property type="pathway name" value="Immunoregulatory interactions between a Lymphoid and a non-Lymphoid cell"/>
</dbReference>
<dbReference type="Reactome" id="R-BTA-2022090">
    <property type="pathway name" value="Assembly of collagen fibrils and other multimeric structures"/>
</dbReference>
<dbReference type="Reactome" id="R-BTA-216083">
    <property type="pathway name" value="Integrin cell surface interactions"/>
</dbReference>
<dbReference type="Reactome" id="R-BTA-3000171">
    <property type="pathway name" value="Non-integrin membrane-ECM interactions"/>
</dbReference>
<dbReference type="Reactome" id="R-BTA-3000178">
    <property type="pathway name" value="ECM proteoglycans"/>
</dbReference>
<dbReference type="Reactome" id="R-BTA-8874081">
    <property type="pathway name" value="MET activates PTK2 signaling"/>
</dbReference>
<dbReference type="Reactome" id="R-BTA-8948216">
    <property type="pathway name" value="Collagen chain trimerization"/>
</dbReference>
<dbReference type="Proteomes" id="UP000009136">
    <property type="component" value="Chromosome 5"/>
</dbReference>
<dbReference type="Bgee" id="ENSBTAG00000013155">
    <property type="expression patterns" value="Expressed in laryngeal cartilage and 58 other cell types or tissues"/>
</dbReference>
<dbReference type="GO" id="GO:0005604">
    <property type="term" value="C:basement membrane"/>
    <property type="evidence" value="ECO:0007669"/>
    <property type="project" value="Ensembl"/>
</dbReference>
<dbReference type="GO" id="GO:0005585">
    <property type="term" value="C:collagen type II trimer"/>
    <property type="evidence" value="ECO:0000318"/>
    <property type="project" value="GO_Central"/>
</dbReference>
<dbReference type="GO" id="GO:0005592">
    <property type="term" value="C:collagen type XI trimer"/>
    <property type="evidence" value="ECO:0000303"/>
    <property type="project" value="ComplexPortal"/>
</dbReference>
<dbReference type="GO" id="GO:0062023">
    <property type="term" value="C:collagen-containing extracellular matrix"/>
    <property type="evidence" value="ECO:0000318"/>
    <property type="project" value="GO_Central"/>
</dbReference>
<dbReference type="GO" id="GO:0005737">
    <property type="term" value="C:cytoplasm"/>
    <property type="evidence" value="ECO:0007669"/>
    <property type="project" value="Ensembl"/>
</dbReference>
<dbReference type="GO" id="GO:0005576">
    <property type="term" value="C:extracellular region"/>
    <property type="evidence" value="ECO:0000304"/>
    <property type="project" value="Reactome"/>
</dbReference>
<dbReference type="GO" id="GO:0005615">
    <property type="term" value="C:extracellular space"/>
    <property type="evidence" value="ECO:0000318"/>
    <property type="project" value="GO_Central"/>
</dbReference>
<dbReference type="GO" id="GO:0030020">
    <property type="term" value="F:extracellular matrix structural constituent conferring tensile strength"/>
    <property type="evidence" value="ECO:0000318"/>
    <property type="project" value="GO_Central"/>
</dbReference>
<dbReference type="GO" id="GO:0046872">
    <property type="term" value="F:metal ion binding"/>
    <property type="evidence" value="ECO:0007669"/>
    <property type="project" value="UniProtKB-KW"/>
</dbReference>
<dbReference type="GO" id="GO:0042289">
    <property type="term" value="F:MHC class II protein binding"/>
    <property type="evidence" value="ECO:0007669"/>
    <property type="project" value="Ensembl"/>
</dbReference>
<dbReference type="GO" id="GO:0048407">
    <property type="term" value="F:platelet-derived growth factor binding"/>
    <property type="evidence" value="ECO:0007669"/>
    <property type="project" value="Ensembl"/>
</dbReference>
<dbReference type="GO" id="GO:0042803">
    <property type="term" value="F:protein homodimerization activity"/>
    <property type="evidence" value="ECO:0007669"/>
    <property type="project" value="Ensembl"/>
</dbReference>
<dbReference type="GO" id="GO:0043394">
    <property type="term" value="F:proteoglycan binding"/>
    <property type="evidence" value="ECO:0007669"/>
    <property type="project" value="Ensembl"/>
</dbReference>
<dbReference type="GO" id="GO:0097065">
    <property type="term" value="P:anterior head development"/>
    <property type="evidence" value="ECO:0007669"/>
    <property type="project" value="Ensembl"/>
</dbReference>
<dbReference type="GO" id="GO:0001502">
    <property type="term" value="P:cartilage condensation"/>
    <property type="evidence" value="ECO:0007669"/>
    <property type="project" value="Ensembl"/>
</dbReference>
<dbReference type="GO" id="GO:0060351">
    <property type="term" value="P:cartilage development involved in endochondral bone morphogenesis"/>
    <property type="evidence" value="ECO:0007669"/>
    <property type="project" value="Ensembl"/>
</dbReference>
<dbReference type="GO" id="GO:0071773">
    <property type="term" value="P:cellular response to BMP stimulus"/>
    <property type="evidence" value="ECO:0007669"/>
    <property type="project" value="Ensembl"/>
</dbReference>
<dbReference type="GO" id="GO:0007417">
    <property type="term" value="P:central nervous system development"/>
    <property type="evidence" value="ECO:0007669"/>
    <property type="project" value="Ensembl"/>
</dbReference>
<dbReference type="GO" id="GO:0002062">
    <property type="term" value="P:chondrocyte differentiation"/>
    <property type="evidence" value="ECO:0007669"/>
    <property type="project" value="Ensembl"/>
</dbReference>
<dbReference type="GO" id="GO:0030199">
    <property type="term" value="P:collagen fibril organization"/>
    <property type="evidence" value="ECO:0007669"/>
    <property type="project" value="Ensembl"/>
</dbReference>
<dbReference type="GO" id="GO:0060272">
    <property type="term" value="P:embryonic skeletal joint morphogenesis"/>
    <property type="evidence" value="ECO:0007669"/>
    <property type="project" value="Ensembl"/>
</dbReference>
<dbReference type="GO" id="GO:0001958">
    <property type="term" value="P:endochondral ossification"/>
    <property type="evidence" value="ECO:0007669"/>
    <property type="project" value="Ensembl"/>
</dbReference>
<dbReference type="GO" id="GO:0097192">
    <property type="term" value="P:extrinsic apoptotic signaling pathway in absence of ligand"/>
    <property type="evidence" value="ECO:0007669"/>
    <property type="project" value="Ensembl"/>
</dbReference>
<dbReference type="GO" id="GO:0003007">
    <property type="term" value="P:heart morphogenesis"/>
    <property type="evidence" value="ECO:0007669"/>
    <property type="project" value="Ensembl"/>
</dbReference>
<dbReference type="GO" id="GO:0042472">
    <property type="term" value="P:inner ear morphogenesis"/>
    <property type="evidence" value="ECO:0007669"/>
    <property type="project" value="Ensembl"/>
</dbReference>
<dbReference type="GO" id="GO:0060174">
    <property type="term" value="P:limb bud formation"/>
    <property type="evidence" value="ECO:0007669"/>
    <property type="project" value="Ensembl"/>
</dbReference>
<dbReference type="GO" id="GO:2001240">
    <property type="term" value="P:negative regulation of extrinsic apoptotic signaling pathway in absence of ligand"/>
    <property type="evidence" value="ECO:0007669"/>
    <property type="project" value="Ensembl"/>
</dbReference>
<dbReference type="GO" id="GO:0030903">
    <property type="term" value="P:notochord development"/>
    <property type="evidence" value="ECO:0007669"/>
    <property type="project" value="Ensembl"/>
</dbReference>
<dbReference type="GO" id="GO:0071599">
    <property type="term" value="P:otic vesicle development"/>
    <property type="evidence" value="ECO:0007669"/>
    <property type="project" value="Ensembl"/>
</dbReference>
<dbReference type="GO" id="GO:0006029">
    <property type="term" value="P:proteoglycan metabolic process"/>
    <property type="evidence" value="ECO:0007669"/>
    <property type="project" value="Ensembl"/>
</dbReference>
<dbReference type="GO" id="GO:0010468">
    <property type="term" value="P:regulation of gene expression"/>
    <property type="evidence" value="ECO:0007669"/>
    <property type="project" value="Ensembl"/>
</dbReference>
<dbReference type="GO" id="GO:0060021">
    <property type="term" value="P:roof of mouth development"/>
    <property type="evidence" value="ECO:0007669"/>
    <property type="project" value="Ensembl"/>
</dbReference>
<dbReference type="GO" id="GO:0007605">
    <property type="term" value="P:sensory perception of sound"/>
    <property type="evidence" value="ECO:0007669"/>
    <property type="project" value="Ensembl"/>
</dbReference>
<dbReference type="GO" id="GO:0001894">
    <property type="term" value="P:tissue homeostasis"/>
    <property type="evidence" value="ECO:0007669"/>
    <property type="project" value="Ensembl"/>
</dbReference>
<dbReference type="GO" id="GO:0007601">
    <property type="term" value="P:visual perception"/>
    <property type="evidence" value="ECO:0007669"/>
    <property type="project" value="Ensembl"/>
</dbReference>
<dbReference type="FunFam" id="2.60.120.1000:FF:000001">
    <property type="entry name" value="Collagen alpha-1 type I chain"/>
    <property type="match status" value="1"/>
</dbReference>
<dbReference type="FunFam" id="2.10.70.10:FF:000013">
    <property type="entry name" value="Collagen, type I, alpha 1"/>
    <property type="match status" value="1"/>
</dbReference>
<dbReference type="Gene3D" id="2.60.120.1000">
    <property type="match status" value="1"/>
</dbReference>
<dbReference type="Gene3D" id="2.10.70.10">
    <property type="entry name" value="Complement Module, domain 1"/>
    <property type="match status" value="1"/>
</dbReference>
<dbReference type="InterPro" id="IPR008160">
    <property type="entry name" value="Collagen"/>
</dbReference>
<dbReference type="InterPro" id="IPR050149">
    <property type="entry name" value="Collagen_superfamily"/>
</dbReference>
<dbReference type="InterPro" id="IPR000885">
    <property type="entry name" value="Fib_collagen_C"/>
</dbReference>
<dbReference type="InterPro" id="IPR001007">
    <property type="entry name" value="VWF_dom"/>
</dbReference>
<dbReference type="PANTHER" id="PTHR24023">
    <property type="entry name" value="COLLAGEN ALPHA"/>
    <property type="match status" value="1"/>
</dbReference>
<dbReference type="PANTHER" id="PTHR24023:SF1082">
    <property type="entry name" value="COLLAGEN TRIPLE HELIX REPEAT"/>
    <property type="match status" value="1"/>
</dbReference>
<dbReference type="Pfam" id="PF01410">
    <property type="entry name" value="COLFI"/>
    <property type="match status" value="1"/>
</dbReference>
<dbReference type="Pfam" id="PF01391">
    <property type="entry name" value="Collagen"/>
    <property type="match status" value="6"/>
</dbReference>
<dbReference type="Pfam" id="PF00093">
    <property type="entry name" value="VWC"/>
    <property type="match status" value="1"/>
</dbReference>
<dbReference type="SMART" id="SM00038">
    <property type="entry name" value="COLFI"/>
    <property type="match status" value="1"/>
</dbReference>
<dbReference type="SMART" id="SM00214">
    <property type="entry name" value="VWC"/>
    <property type="match status" value="1"/>
</dbReference>
<dbReference type="SUPFAM" id="SSF57603">
    <property type="entry name" value="FnI-like domain"/>
    <property type="match status" value="1"/>
</dbReference>
<dbReference type="PROSITE" id="PS51461">
    <property type="entry name" value="NC1_FIB"/>
    <property type="match status" value="1"/>
</dbReference>
<dbReference type="PROSITE" id="PS01208">
    <property type="entry name" value="VWFC_1"/>
    <property type="match status" value="1"/>
</dbReference>
<dbReference type="PROSITE" id="PS50184">
    <property type="entry name" value="VWFC_2"/>
    <property type="match status" value="1"/>
</dbReference>
<proteinExistence type="evidence at protein level"/>
<sequence>MIRLGAPQTLVLLTLLVAAVLRCHGQDVQKAGSCVQDGQRYNDKDVWKPEPCRICVCDTGTVLCDDIICEDMKDCLSPETPFGECCPICSADLPTASGQPGPKGQKGEPGDIKDIVGPKGPPGPQGPAGEQGPRGDRGDKGEKGAPGPRGRDGEPGTPGNPGPPGPPGPPGPPGLGGNFAAQMAGGFDEKAGGAQMGVMQGPMGPMGPRGPPGPAGAPGPQGFQGNPGEPGEPGVSGPMGPRGPPGPPGKPGDDGEAGKPGKSGERGPPGPQGARGFPGTPGLPGVKGHRGYPGLDGAKGEAGAPGVKGESGSPGENGSPGPMGPRGLPGERGRTGPAGAAGARGNDGQPGPAGPPGPVGPAGGPGFPGAPGAKGEAGPTGARGPEGAQGPRGEPGTPGSPGPAGAAGNPGTDGIPGAKGSAGAPGIAGAPGFPGPRGPPGPQGATGPLGPKGQTGEPGIAGFKGEQGPKGEPGPAGPQGAPGPAGEEGKRGARGEPGGAGPAGPPGERGAPGNRGFPGQDGLAGPKGAPGERGPSGLAGPKGANGDPGRPGEPGLPGARGLTGRPGDAGPQGKVGPSGAPGEDGRPGPPGPQGARGQPGVMGFPGPKGANGEPGKAGEKGLPGAPGLRGLPGKDGETGAAGPPGPAGPAGERGEQGAPGPSGFQGLPGPPGPPGEGGKPGDQGVPGEAGAPGLVGPRGERGFPGERGSPGSQGLQGARGLPGTPGTDGPKGAAGPAGPPGAQGPPGLQGMPGERGAAGIAGPKGDRGDVGEKGPEGAPGKDGGRGLTGPIGPPGPAGANGEKGEVGPPGPAGTAGARGAPGERGETGPPGPAGFAGPPGADGQPGAKGEQGEAGQKGDAGAPGPQGPSGAPGPQGPTGVTGPKGARGAQGPPGATGFPGAAGRVGPPGSNGNPGPPGPPGPSGKDGPKGARGDSGPPGRAGDPGLQGPAGPPGEKGEPGDDGPSGPDGPPGPQGLAGQRGIVGLPGQRGERGFPGLPGPSGEPGKQGAPGASGDRGPPGPVGPPGLTGPAGEPGREGSPGADGPPGRDGAAGVKGDRGETGAVGAPGAPGPPGSPGPAGPIGKQGDRGEAGAQGPMGPAGPAGARGMPGPQGPRGDKGETGEAGERGLKGHRGFTGLQGLPGPPGPSGDQGASGPAGPSGPRGPPGPVGPSGKDGANGIPGPIGPPGPRGRSGETGPAGPPGNPGPPGPPGPPGPGIDMSAFAGLGQREKGPDPLQYMRADEAAGNLRQHDAEVDATLKSLNNQIESLRSPEGSRKNPARTCRDLKLCHPEWKSGDYWIDPNQGCTLDAMKVFCNMETGETCVYPNPASVPKKNWWSSKSKDKKHIWFGETINGGFHFSYGDDNLAPNTANVQMTFLRLLSTEGSQNITYHCKNSIAYLDEAAGNLKKALLIQGSNDVEIRAEGNSRFTYTVLKDGCTKHTGKWGKTMIEYRSQKTSRLPIIDIAPMDIGGPEQEFGVDIGPVCFL</sequence>
<comment type="function">
    <text>Type II collagen is specific for cartilaginous tissues. It is essential for the normal embryonic development of the skeleton, for linear growth and for the ability of cartilage to resist compressive forces.</text>
</comment>
<comment type="subunit">
    <text>Homotrimers of alpha 1(II) chains.</text>
</comment>
<comment type="interaction">
    <interactant intactId="EBI-5281315">
        <id>P02459</id>
    </interactant>
    <interactant intactId="EBI-20828128">
        <id>P21941</id>
        <label>MATN1</label>
    </interactant>
    <organismsDiffer>true</organismsDiffer>
    <experiments>3</experiments>
</comment>
<comment type="subcellular location">
    <subcellularLocation>
        <location evidence="6">Secreted</location>
        <location evidence="6">Extracellular space</location>
        <location evidence="6">Extracellular matrix</location>
    </subcellularLocation>
</comment>
<comment type="domain">
    <text evidence="1">The C-terminal propeptide, also known as COLFI domain, have crucial roles in tissue growth and repair by controlling both the intracellular assembly of procollagen molecules and the extracellular assembly of collagen fibrils. It binds a calcium ion which is essential for its function (By similarity).</text>
</comment>
<comment type="PTM">
    <text evidence="1 8 9 10 11">Probably 3-hydroxylated on prolines by LEPREL1 (By similarity). Proline residues at the third position of the tripeptide repeating unit (G-X-P) are hydroxylated in some or all of the chains. Proline residues at the second position of the tripeptide repeating unit (G-P-X) are hydroxylated in some of the chains.</text>
</comment>
<comment type="PTM">
    <text evidence="8 9 10">O-linked glycans consist of Glc-Gal disaccharides bound to the oxygen atom of post-translationally added hydroxyl groups.</text>
</comment>
<comment type="PTM">
    <text evidence="8 9 10 11">Contains mostly 4-hydroxyproline. Prolines at the third position of the tripeptide repeating unit (G-X-P) are 4-hydroxylated in some or all of the chains.</text>
</comment>
<comment type="PTM">
    <text evidence="3">Contains 3-hydroxyproline at a few sites. This modification occurs on the first proline residue in the sequence motif Gly-Pro-Hyp, where Hyp is 4-hydroxyproline.</text>
</comment>
<comment type="PTM">
    <text evidence="3">Lysine residues at the third position of the tripeptide repeating unit (G-X-Y) are 5-hydroxylated in some or all of the chains.</text>
</comment>
<comment type="PTM">
    <text evidence="8 9 10">O-glycosylated on hydroxylated lysine residues. The O-linked glycan consists of a Glc-Gal disaccharide.</text>
</comment>
<comment type="similarity">
    <text evidence="6">Belongs to the fibrillar collagen family.</text>
</comment>
<reference key="1">
    <citation type="journal article" date="2009" name="Science">
        <title>The genome sequence of taurine cattle: a window to ruminant biology and evolution.</title>
        <authorList>
            <consortium name="The bovine genome sequencing and analysis consortium"/>
        </authorList>
    </citation>
    <scope>NUCLEOTIDE SEQUENCE [LARGE SCALE GENOMIC DNA]</scope>
    <source>
        <strain>Hereford</strain>
    </source>
</reference>
<reference key="2">
    <citation type="journal article" date="1976" name="Biochemistry">
        <title>The covalent structure of cartilage collagen. Amino acid sequence of the NH2-terminal helical portion of the alpha 1 (II) chain.</title>
        <authorList>
            <person name="Butler W.T."/>
            <person name="Miller E.J."/>
            <person name="Finch J.E. Jr."/>
        </authorList>
    </citation>
    <scope>PROTEIN SEQUENCE OF 201-362</scope>
    <scope>HYDROXYLATION AT PRO-212; PRO-218; PRO-230; PRO-233; PRO-245; PRO-248; PRO-251; PRO-260; PRO-269; PRO-278; PRO-281; PRO-284; LYS-287; PRO-293; LYS-299; PRO-305; LYS-308; PRO-314; PRO-320; PRO-329; PRO-350 AND PRO-356</scope>
    <scope>GLYCOSYLATION AT LYS-287; LYS-299 AND LYS-308</scope>
    <source>
        <tissue>Cartilage</tissue>
    </source>
</reference>
<reference key="3">
    <citation type="journal article" date="1977" name="J. Biol. Chem.">
        <title>The covalent structure of cartilage collagen. Evidence for sequence heterogeneity of bovine alpha1(II) chains.</title>
        <authorList>
            <person name="Butler W.T."/>
            <person name="Finch J.E. Jr."/>
            <person name="Miller E.J."/>
        </authorList>
    </citation>
    <scope>PROTEIN SEQUENCE OF 345-359</scope>
    <scope>HYDROXYLATION AT PRO-350 AND PRO-356</scope>
    <scope>VARIANT LEU-349</scope>
    <source>
        <tissue>Cartilage</tissue>
    </source>
</reference>
<reference key="4">
    <citation type="journal article" date="1989" name="Eur. J. Biochem.">
        <title>Covalent structure of collagen. Amino acid sequence of an arthritogenic cyanogen bromide peptide from type II collagen of bovine cartilage.</title>
        <authorList>
            <person name="Seyer J.M."/>
            <person name="Hasty K.A."/>
            <person name="Kang A.H."/>
        </authorList>
    </citation>
    <scope>PROTEIN SEQUENCE OF 324-602</scope>
    <scope>HYDROXYLATION AT PRO-329; PRO-350; PRO-356; PRO-365; PRO-368; PRO-371; LYS-374; PRO-395; PRO-398; PRO-401; PRO-410; PRO-416; LYS-419; PRO-425; PRO-431; PRO-434; PRO-440; LYS-452; PRO-458; LYS-464; LYS-470; PRO-473; PRO-482; PRO-497; PRO-506; PRO-512; PRO-518; LYS-527; PRO-530; LYS-542; PRO-551; PRO-557; PRO-566; PRO-581; PRO-587; PRO-590 AND PRO-599</scope>
    <scope>GLYCOSYLATION AT LYS-374</scope>
    <source>
        <tissue>Cartilage</tissue>
    </source>
</reference>
<reference key="5">
    <citation type="journal article" date="1974" name="Biochem. Biophys. Res. Commun.">
        <title>Homologous regions of collagen alpha1(I) and alpha1(II) chains: apparent clustering of variable and invariant amino acid residues.</title>
        <authorList>
            <person name="Butler W.T."/>
            <person name="Miller E.J."/>
            <person name="Finch J.E. Jr."/>
            <person name="Inagami T."/>
        </authorList>
    </citation>
    <scope>PROTEIN SEQUENCE OF 603-677</scope>
    <scope>HYDROXYLATION AT PRO-605; LYS-608; PRO-614; LYS-620; PRO-623; PRO-626; PRO-632; PRO-644; PRO-659; PRO-668; PRO-671 AND PRO-674</scope>
    <scope>GLYCOSYLATION AT LYS-608 AND LYS-620</scope>
</reference>
<reference key="6">
    <citation type="journal article" date="1994" name="J. Immunol.">
        <title>Characterization of the T cell determinants in the induction of autoimmune arthritis by bovine alpha 1(II)-CB11 in H-2q mice.</title>
        <authorList>
            <person name="Brand D.D."/>
            <person name="Myers L.K."/>
            <person name="Terato K."/>
            <person name="Whittington K.B."/>
            <person name="Stuart J.M."/>
            <person name="Kang A.H."/>
            <person name="Rosloniec E.F."/>
        </authorList>
    </citation>
    <scope>NUCLEOTIDE SEQUENCE [MRNA] OF 323-602</scope>
    <source>
        <tissue>Chondrocyte</tissue>
    </source>
</reference>
<reference key="7">
    <citation type="journal article" date="1999" name="Clin. Immunol.">
        <title>Molecular definition and characterization of recombinant bovine CB8 and CB10: immunogenicity and arthritogenicity.</title>
        <authorList>
            <person name="Tang B."/>
            <person name="Chiang T.M."/>
            <person name="Brand D.D."/>
            <person name="Gumanovskaya M.L."/>
            <person name="Stuart J.M."/>
            <person name="Kang A.H."/>
            <person name="Myers L.K."/>
        </authorList>
    </citation>
    <scope>NUCLEOTIDE SEQUENCE [MRNA] OF 602-751</scope>
    <source>
        <tissue>Chondrocyte</tissue>
    </source>
</reference>
<reference key="8">
    <citation type="journal article" date="1985" name="Nucleic Acids Res.">
        <title>Analysis of cDNA and genomic clones coding for the pro alpha 1 chain of calf type II collagen.</title>
        <authorList>
            <person name="Sangiorgi F.O."/>
            <person name="Benson-Chanda V."/>
            <person name="de Wet W.J."/>
            <person name="Sobel M.E."/>
            <person name="Ramirez F."/>
        </authorList>
    </citation>
    <scope>NUCLEOTIDE SEQUENCE [MRNA] OF 1307-1487</scope>
</reference>
<protein>
    <recommendedName>
        <fullName evidence="2">Collagen alpha-1(II) chain</fullName>
    </recommendedName>
    <alternativeName>
        <fullName evidence="2">Alpha-1 type II collagen</fullName>
    </alternativeName>
</protein>
<evidence type="ECO:0000250" key="1"/>
<evidence type="ECO:0000250" key="2">
    <source>
        <dbReference type="UniProtKB" id="P02458"/>
    </source>
</evidence>
<evidence type="ECO:0000250" key="3">
    <source>
        <dbReference type="UniProtKB" id="P05539"/>
    </source>
</evidence>
<evidence type="ECO:0000255" key="4"/>
<evidence type="ECO:0000255" key="5">
    <source>
        <dbReference type="PROSITE-ProRule" id="PRU00220"/>
    </source>
</evidence>
<evidence type="ECO:0000255" key="6">
    <source>
        <dbReference type="PROSITE-ProRule" id="PRU00793"/>
    </source>
</evidence>
<evidence type="ECO:0000256" key="7">
    <source>
        <dbReference type="SAM" id="MobiDB-lite"/>
    </source>
</evidence>
<evidence type="ECO:0000269" key="8">
    <source>
    </source>
</evidence>
<evidence type="ECO:0000269" key="9">
    <source>
    </source>
</evidence>
<evidence type="ECO:0000269" key="10">
    <source>
    </source>
</evidence>
<evidence type="ECO:0000269" key="11">
    <source>
    </source>
</evidence>
<evidence type="ECO:0000305" key="12"/>
<keyword id="KW-0106">Calcium</keyword>
<keyword id="KW-0176">Collagen</keyword>
<keyword id="KW-0903">Direct protein sequencing</keyword>
<keyword id="KW-1015">Disulfide bond</keyword>
<keyword id="KW-0272">Extracellular matrix</keyword>
<keyword id="KW-0325">Glycoprotein</keyword>
<keyword id="KW-0379">Hydroxylation</keyword>
<keyword id="KW-0479">Metal-binding</keyword>
<keyword id="KW-1185">Reference proteome</keyword>
<keyword id="KW-0677">Repeat</keyword>
<keyword id="KW-0964">Secreted</keyword>
<keyword id="KW-0732">Signal</keyword>
<organism>
    <name type="scientific">Bos taurus</name>
    <name type="common">Bovine</name>
    <dbReference type="NCBI Taxonomy" id="9913"/>
    <lineage>
        <taxon>Eukaryota</taxon>
        <taxon>Metazoa</taxon>
        <taxon>Chordata</taxon>
        <taxon>Craniata</taxon>
        <taxon>Vertebrata</taxon>
        <taxon>Euteleostomi</taxon>
        <taxon>Mammalia</taxon>
        <taxon>Eutheria</taxon>
        <taxon>Laurasiatheria</taxon>
        <taxon>Artiodactyla</taxon>
        <taxon>Ruminantia</taxon>
        <taxon>Pecora</taxon>
        <taxon>Bovidae</taxon>
        <taxon>Bovinae</taxon>
        <taxon>Bos</taxon>
    </lineage>
</organism>
<accession>P02459</accession>
<accession>Q28070</accession>
<accession>Q9XT24</accession>
<accession>Q9XT25</accession>
<gene>
    <name evidence="2" type="primary">COL2A1</name>
</gene>
<feature type="signal peptide" evidence="4">
    <location>
        <begin position="1"/>
        <end position="25"/>
    </location>
</feature>
<feature type="propeptide" id="PRO_0000401210" description="N-terminal propeptide" evidence="1">
    <location>
        <begin position="26"/>
        <end position="181"/>
    </location>
</feature>
<feature type="chain" id="PRO_0000005725" description="Collagen alpha-1(II) chain">
    <location>
        <begin position="182"/>
        <end position="1487"/>
    </location>
</feature>
<feature type="domain" description="VWFC" evidence="5">
    <location>
        <begin position="32"/>
        <end position="90"/>
    </location>
</feature>
<feature type="domain" description="Fibrillar collagen NC1" evidence="6">
    <location>
        <begin position="1253"/>
        <end position="1487"/>
    </location>
</feature>
<feature type="region of interest" description="Disordered" evidence="7">
    <location>
        <begin position="96"/>
        <end position="1234"/>
    </location>
</feature>
<feature type="region of interest" description="Triple-helical region" evidence="1">
    <location>
        <begin position="201"/>
        <end position="1214"/>
    </location>
</feature>
<feature type="region of interest" description="Nonhelical region (C-terminal)" evidence="1">
    <location>
        <begin position="1215"/>
        <end position="1241"/>
    </location>
</feature>
<feature type="compositionally biased region" description="Basic and acidic residues" evidence="7">
    <location>
        <begin position="105"/>
        <end position="116"/>
    </location>
</feature>
<feature type="compositionally biased region" description="Basic and acidic residues" evidence="7">
    <location>
        <begin position="133"/>
        <end position="154"/>
    </location>
</feature>
<feature type="compositionally biased region" description="Pro residues" evidence="7">
    <location>
        <begin position="158"/>
        <end position="173"/>
    </location>
</feature>
<feature type="compositionally biased region" description="Low complexity" evidence="7">
    <location>
        <begin position="192"/>
        <end position="203"/>
    </location>
</feature>
<feature type="compositionally biased region" description="Pro residues" evidence="7">
    <location>
        <begin position="208"/>
        <end position="217"/>
    </location>
</feature>
<feature type="compositionally biased region" description="Low complexity" evidence="7">
    <location>
        <begin position="218"/>
        <end position="239"/>
    </location>
</feature>
<feature type="compositionally biased region" description="Pro residues" evidence="7">
    <location>
        <begin position="241"/>
        <end position="250"/>
    </location>
</feature>
<feature type="compositionally biased region" description="Basic and acidic residues" evidence="7">
    <location>
        <begin position="251"/>
        <end position="265"/>
    </location>
</feature>
<feature type="compositionally biased region" description="Low complexity" evidence="7">
    <location>
        <begin position="310"/>
        <end position="320"/>
    </location>
</feature>
<feature type="compositionally biased region" description="Low complexity" evidence="7">
    <location>
        <begin position="335"/>
        <end position="350"/>
    </location>
</feature>
<feature type="compositionally biased region" description="Gly residues" evidence="7">
    <location>
        <begin position="360"/>
        <end position="369"/>
    </location>
</feature>
<feature type="compositionally biased region" description="Low complexity" evidence="7">
    <location>
        <begin position="370"/>
        <end position="382"/>
    </location>
</feature>
<feature type="compositionally biased region" description="Low complexity" evidence="7">
    <location>
        <begin position="391"/>
        <end position="431"/>
    </location>
</feature>
<feature type="compositionally biased region" description="Pro residues" evidence="7">
    <location>
        <begin position="433"/>
        <end position="442"/>
    </location>
</feature>
<feature type="compositionally biased region" description="Low complexity" evidence="7">
    <location>
        <begin position="622"/>
        <end position="631"/>
    </location>
</feature>
<feature type="compositionally biased region" description="Low complexity" evidence="7">
    <location>
        <begin position="656"/>
        <end position="667"/>
    </location>
</feature>
<feature type="compositionally biased region" description="Low complexity" evidence="7">
    <location>
        <begin position="721"/>
        <end position="736"/>
    </location>
</feature>
<feature type="compositionally biased region" description="Basic and acidic residues" evidence="7">
    <location>
        <begin position="764"/>
        <end position="775"/>
    </location>
</feature>
<feature type="compositionally biased region" description="Low complexity" evidence="7">
    <location>
        <begin position="833"/>
        <end position="848"/>
    </location>
</feature>
<feature type="compositionally biased region" description="Low complexity" evidence="7">
    <location>
        <begin position="877"/>
        <end position="913"/>
    </location>
</feature>
<feature type="compositionally biased region" description="Pro residues" evidence="7">
    <location>
        <begin position="1069"/>
        <end position="1079"/>
    </location>
</feature>
<feature type="compositionally biased region" description="Low complexity" evidence="7">
    <location>
        <begin position="1091"/>
        <end position="1109"/>
    </location>
</feature>
<feature type="compositionally biased region" description="Basic and acidic residues" evidence="7">
    <location>
        <begin position="1115"/>
        <end position="1129"/>
    </location>
</feature>
<feature type="compositionally biased region" description="Low complexity" evidence="7">
    <location>
        <begin position="1148"/>
        <end position="1157"/>
    </location>
</feature>
<feature type="compositionally biased region" description="Pro residues" evidence="7">
    <location>
        <begin position="1199"/>
        <end position="1216"/>
    </location>
</feature>
<feature type="binding site" evidence="1">
    <location>
        <position position="1301"/>
    </location>
    <ligand>
        <name>Ca(2+)</name>
        <dbReference type="ChEBI" id="CHEBI:29108"/>
    </ligand>
</feature>
<feature type="binding site" evidence="1">
    <location>
        <position position="1303"/>
    </location>
    <ligand>
        <name>Ca(2+)</name>
        <dbReference type="ChEBI" id="CHEBI:29108"/>
    </ligand>
</feature>
<feature type="binding site" evidence="1">
    <location>
        <position position="1304"/>
    </location>
    <ligand>
        <name>Ca(2+)</name>
        <dbReference type="ChEBI" id="CHEBI:29108"/>
    </ligand>
</feature>
<feature type="binding site" evidence="1">
    <location>
        <position position="1306"/>
    </location>
    <ligand>
        <name>Ca(2+)</name>
        <dbReference type="ChEBI" id="CHEBI:29108"/>
    </ligand>
</feature>
<feature type="binding site" evidence="1">
    <location>
        <position position="1309"/>
    </location>
    <ligand>
        <name>Ca(2+)</name>
        <dbReference type="ChEBI" id="CHEBI:29108"/>
    </ligand>
</feature>
<feature type="site" description="Cleavage; by procollagen N-endopeptidase" evidence="1">
    <location>
        <begin position="181"/>
        <end position="182"/>
    </location>
</feature>
<feature type="site" description="Cleavage; by procollagen C-endopeptidase" evidence="1">
    <location>
        <begin position="1241"/>
        <end position="1242"/>
    </location>
</feature>
<feature type="modified residue" description="5-hydroxylysine" evidence="1">
    <location>
        <position position="190"/>
    </location>
</feature>
<feature type="modified residue" description="Hydroxyproline" evidence="10">
    <location>
        <position position="212"/>
    </location>
</feature>
<feature type="modified residue" description="Hydroxyproline" evidence="10">
    <location>
        <position position="218"/>
    </location>
</feature>
<feature type="modified residue" description="Hydroxyproline" evidence="10">
    <location>
        <position position="230"/>
    </location>
</feature>
<feature type="modified residue" description="Hydroxyproline" evidence="10">
    <location>
        <position position="233"/>
    </location>
</feature>
<feature type="modified residue" description="Hydroxyproline" evidence="10">
    <location>
        <position position="245"/>
    </location>
</feature>
<feature type="modified residue" description="Hydroxyproline" evidence="10">
    <location>
        <position position="248"/>
    </location>
</feature>
<feature type="modified residue" description="Hydroxyproline" evidence="10">
    <location>
        <position position="251"/>
    </location>
</feature>
<feature type="modified residue" description="Hydroxyproline" evidence="10">
    <location>
        <position position="260"/>
    </location>
</feature>
<feature type="modified residue" description="Hydroxyproline" evidence="10">
    <location>
        <position position="269"/>
    </location>
</feature>
<feature type="modified residue" description="Hydroxyproline" evidence="10">
    <location>
        <position position="278"/>
    </location>
</feature>
<feature type="modified residue" description="Hydroxyproline" evidence="10">
    <location>
        <position position="281"/>
    </location>
</feature>
<feature type="modified residue" description="Hydroxyproline" evidence="10">
    <location>
        <position position="284"/>
    </location>
</feature>
<feature type="modified residue" description="5-hydroxylysine" evidence="10">
    <location>
        <position position="287"/>
    </location>
</feature>
<feature type="modified residue" description="Hydroxyproline" evidence="10">
    <location>
        <position position="293"/>
    </location>
</feature>
<feature type="modified residue" description="5-hydroxylysine" evidence="10">
    <location>
        <position position="299"/>
    </location>
</feature>
<feature type="modified residue" description="Hydroxyproline" evidence="10">
    <location>
        <position position="305"/>
    </location>
</feature>
<feature type="modified residue" description="5-hydroxylysine" evidence="10">
    <location>
        <position position="308"/>
    </location>
</feature>
<feature type="modified residue" description="Hydroxyproline" evidence="10">
    <location>
        <position position="314"/>
    </location>
</feature>
<feature type="modified residue" description="Hydroxyproline" evidence="10">
    <location>
        <position position="320"/>
    </location>
</feature>
<feature type="modified residue" description="Hydroxyproline" evidence="8 10">
    <location>
        <position position="329"/>
    </location>
</feature>
<feature type="modified residue" description="Hydroxyproline" evidence="8 10 11">
    <location>
        <position position="350"/>
    </location>
</feature>
<feature type="modified residue" description="Hydroxyproline" evidence="8 10 11">
    <location>
        <position position="356"/>
    </location>
</feature>
<feature type="modified residue" description="Hydroxyproline" evidence="8">
    <location>
        <position position="365"/>
    </location>
</feature>
<feature type="modified residue" description="Hydroxyproline" evidence="8">
    <location>
        <position position="368"/>
    </location>
</feature>
<feature type="modified residue" description="Hydroxyproline" evidence="8">
    <location>
        <position position="371"/>
    </location>
</feature>
<feature type="modified residue" description="5-hydroxylysine" evidence="8">
    <location>
        <position position="374"/>
    </location>
</feature>
<feature type="modified residue" description="Hydroxyproline" evidence="8">
    <location>
        <position position="395"/>
    </location>
</feature>
<feature type="modified residue" description="Hydroxyproline" evidence="8">
    <location>
        <position position="398"/>
    </location>
</feature>
<feature type="modified residue" description="Hydroxyproline" evidence="8">
    <location>
        <position position="401"/>
    </location>
</feature>
<feature type="modified residue" description="Hydroxyproline" evidence="8">
    <location>
        <position position="410"/>
    </location>
</feature>
<feature type="modified residue" description="Hydroxyproline" evidence="8">
    <location>
        <position position="416"/>
    </location>
</feature>
<feature type="modified residue" description="5-hydroxylysine" evidence="8">
    <location>
        <position position="419"/>
    </location>
</feature>
<feature type="modified residue" description="Hydroxyproline" evidence="8">
    <location>
        <position position="425"/>
    </location>
</feature>
<feature type="modified residue" description="Hydroxyproline" evidence="8">
    <location>
        <position position="431"/>
    </location>
</feature>
<feature type="modified residue" description="Hydroxyproline" evidence="8">
    <location>
        <position position="434"/>
    </location>
</feature>
<feature type="modified residue" description="Hydroxyproline" evidence="8">
    <location>
        <position position="440"/>
    </location>
</feature>
<feature type="modified residue" description="5-hydroxylysine" evidence="8">
    <location>
        <position position="452"/>
    </location>
</feature>
<feature type="modified residue" description="Hydroxyproline" evidence="8">
    <location>
        <position position="458"/>
    </location>
</feature>
<feature type="modified residue" description="5-hydroxylysine" evidence="8">
    <location>
        <position position="464"/>
    </location>
</feature>
<feature type="modified residue" description="5-hydroxylysine" evidence="8">
    <location>
        <position position="470"/>
    </location>
</feature>
<feature type="modified residue" description="Hydroxyproline" evidence="8">
    <location>
        <position position="473"/>
    </location>
</feature>
<feature type="modified residue" description="Hydroxyproline" evidence="8">
    <location>
        <position position="482"/>
    </location>
</feature>
<feature type="modified residue" description="Hydroxyproline" evidence="8">
    <location>
        <position position="497"/>
    </location>
</feature>
<feature type="modified residue" description="Hydroxyproline" evidence="8">
    <location>
        <position position="506"/>
    </location>
</feature>
<feature type="modified residue" description="Hydroxyproline" evidence="8">
    <location>
        <position position="512"/>
    </location>
</feature>
<feature type="modified residue" description="Hydroxyproline" evidence="8">
    <location>
        <position position="518"/>
    </location>
</feature>
<feature type="modified residue" description="5-hydroxylysine" evidence="8">
    <location>
        <position position="527"/>
    </location>
</feature>
<feature type="modified residue" description="Hydroxyproline" evidence="8">
    <location>
        <position position="530"/>
    </location>
</feature>
<feature type="modified residue" description="5-hydroxylysine" evidence="8">
    <location>
        <position position="542"/>
    </location>
</feature>
<feature type="modified residue" description="Hydroxyproline" evidence="8">
    <location>
        <position position="551"/>
    </location>
</feature>
<feature type="modified residue" description="Hydroxyproline" evidence="8">
    <location>
        <position position="557"/>
    </location>
</feature>
<feature type="modified residue" description="Hydroxyproline" evidence="8">
    <location>
        <position position="566"/>
    </location>
</feature>
<feature type="modified residue" description="Hydroxyproline" evidence="8">
    <location>
        <position position="581"/>
    </location>
</feature>
<feature type="modified residue" description="Hydroxyproline" evidence="8">
    <location>
        <position position="587"/>
    </location>
</feature>
<feature type="modified residue" description="Hydroxyproline" evidence="8">
    <location>
        <position position="590"/>
    </location>
</feature>
<feature type="modified residue" description="Hydroxyproline" evidence="8">
    <location>
        <position position="599"/>
    </location>
</feature>
<feature type="modified residue" description="Hydroxyproline" evidence="9">
    <location>
        <position position="605"/>
    </location>
</feature>
<feature type="modified residue" description="5-hydroxylysine" evidence="9">
    <location>
        <position position="608"/>
    </location>
</feature>
<feature type="modified residue" description="Hydroxyproline" evidence="9">
    <location>
        <position position="614"/>
    </location>
</feature>
<feature type="modified residue" description="5-hydroxylysine" evidence="9">
    <location>
        <position position="620"/>
    </location>
</feature>
<feature type="modified residue" description="Hydroxyproline" evidence="9">
    <location>
        <position position="623"/>
    </location>
</feature>
<feature type="modified residue" description="Hydroxyproline" evidence="9">
    <location>
        <position position="626"/>
    </location>
</feature>
<feature type="modified residue" description="Hydroxyproline" evidence="9">
    <location>
        <position position="632"/>
    </location>
</feature>
<feature type="modified residue" description="Hydroxyproline" evidence="9">
    <location>
        <position position="644"/>
    </location>
</feature>
<feature type="modified residue" description="Hydroxyproline" evidence="9">
    <location>
        <position position="659"/>
    </location>
</feature>
<feature type="modified residue" description="Hydroxyproline" evidence="9">
    <location>
        <position position="668"/>
    </location>
</feature>
<feature type="modified residue" description="3-hydroxyproline" evidence="3">
    <location>
        <position position="670"/>
    </location>
</feature>
<feature type="modified residue" description="Hydroxyproline" evidence="9">
    <location>
        <position position="671"/>
    </location>
</feature>
<feature type="modified residue" description="Hydroxyproline" evidence="9">
    <location>
        <position position="674"/>
    </location>
</feature>
<feature type="modified residue" description="3-hydroxyproline" evidence="3">
    <location>
        <position position="907"/>
    </location>
</feature>
<feature type="modified residue" description="4-hydroxyproline" evidence="3">
    <location>
        <position position="908"/>
    </location>
</feature>
<feature type="modified residue" description="4-hydroxyproline" evidence="3">
    <location>
        <position position="914"/>
    </location>
</feature>
<feature type="modified residue" description="4-hydroxyproline" evidence="3">
    <location>
        <position position="920"/>
    </location>
</feature>
<feature type="modified residue" description="5-hydroxylysine" evidence="1">
    <location>
        <position position="1130"/>
    </location>
</feature>
<feature type="modified residue" description="3-hydroxyproline" evidence="1">
    <location>
        <position position="1144"/>
    </location>
</feature>
<feature type="modified residue" description="4-hydroxyproline" evidence="3">
    <location>
        <position position="1181"/>
    </location>
</feature>
<feature type="modified residue" description="3-hydroxyproline" evidence="3">
    <location>
        <position position="1186"/>
    </location>
</feature>
<feature type="modified residue" description="4-hydroxyproline" evidence="3">
    <location>
        <position position="1187"/>
    </location>
</feature>
<feature type="modified residue" description="3-hydroxyproline" evidence="3">
    <location>
        <position position="1201"/>
    </location>
</feature>
<feature type="modified residue" description="4-hydroxyproline" evidence="3">
    <location>
        <position position="1202"/>
    </location>
</feature>
<feature type="modified residue" description="4-hydroxyproline" evidence="3">
    <location>
        <position position="1205"/>
    </location>
</feature>
<feature type="modified residue" description="3-hydroxyproline" evidence="3">
    <location>
        <position position="1207"/>
    </location>
</feature>
<feature type="modified residue" description="4-hydroxyproline" evidence="3">
    <location>
        <position position="1208"/>
    </location>
</feature>
<feature type="modified residue" description="4-hydroxyproline" evidence="3">
    <location>
        <position position="1211"/>
    </location>
</feature>
<feature type="modified residue" description="3-hydroxyproline" evidence="3">
    <location>
        <position position="1213"/>
    </location>
</feature>
<feature type="modified residue" description="4-hydroxyproline" evidence="3">
    <location>
        <position position="1214"/>
    </location>
</feature>
<feature type="glycosylation site" description="O-linked (Gal...) hydroxylysine" evidence="1">
    <location>
        <position position="190"/>
    </location>
</feature>
<feature type="glycosylation site" description="O-linked (Gal...) hydroxylysine" evidence="10">
    <location>
        <position position="287"/>
    </location>
</feature>
<feature type="glycosylation site" description="O-linked (Gal...) hydroxylysine" evidence="10">
    <location>
        <position position="299"/>
    </location>
</feature>
<feature type="glycosylation site" description="O-linked (Gal...) hydroxylysine" evidence="10">
    <location>
        <position position="308"/>
    </location>
</feature>
<feature type="glycosylation site" description="O-linked (Gal...) hydroxylysine" evidence="1">
    <location>
        <position position="374"/>
    </location>
</feature>
<feature type="glycosylation site" description="O-linked (Gal...) hydroxylysine" evidence="9">
    <location>
        <position position="608"/>
    </location>
</feature>
<feature type="glycosylation site" description="O-linked (Gal...) hydroxylysine" evidence="9">
    <location>
        <position position="620"/>
    </location>
</feature>
<feature type="glycosylation site" description="O-linked (Gal...) hydroxylysine" evidence="1">
    <location>
        <position position="1130"/>
    </location>
</feature>
<feature type="glycosylation site" description="N-linked (GlcNAc...) asparagine" evidence="4">
    <location>
        <position position="1388"/>
    </location>
</feature>
<feature type="disulfide bond" evidence="6">
    <location>
        <begin position="1283"/>
        <end position="1315"/>
    </location>
</feature>
<feature type="disulfide bond" description="Interchain (with C-1306)" evidence="6">
    <location>
        <position position="1289"/>
    </location>
</feature>
<feature type="disulfide bond" description="Interchain (with C-1289)" evidence="6">
    <location>
        <position position="1306"/>
    </location>
</feature>
<feature type="disulfide bond" evidence="6">
    <location>
        <begin position="1323"/>
        <end position="1485"/>
    </location>
</feature>
<feature type="disulfide bond" evidence="6">
    <location>
        <begin position="1393"/>
        <end position="1438"/>
    </location>
</feature>
<feature type="sequence variant" evidence="11">
    <original>Q</original>
    <variation>L</variation>
    <location>
        <position position="349"/>
    </location>
</feature>
<feature type="sequence conflict" description="In Ref. 2; AA sequence." evidence="12" ref="2">
    <original>P</original>
    <variation>V</variation>
    <location>
        <position position="202"/>
    </location>
</feature>
<feature type="sequence conflict" description="In Ref. 4; AA sequence." evidence="12" ref="4">
    <original>T</original>
    <variation>Q</variation>
    <location>
        <position position="380"/>
    </location>
</feature>
<feature type="sequence conflict" description="In Ref. 4; AA sequence." evidence="12" ref="4">
    <original>S</original>
    <variation>A</variation>
    <location>
        <position position="400"/>
    </location>
</feature>
<feature type="sequence conflict" description="In Ref. 4; AA sequence." evidence="12" ref="4">
    <original>T</original>
    <variation>A</variation>
    <location>
        <position position="412"/>
    </location>
</feature>
<feature type="sequence conflict" description="In Ref. 4; AA sequence." evidence="12" ref="4">
    <original>P</original>
    <variation>A</variation>
    <location>
        <position position="436"/>
    </location>
</feature>
<feature type="sequence conflict" description="In Ref. 4; AA sequence." evidence="12" ref="4">
    <original>Q</original>
    <variation>T</variation>
    <location>
        <position position="443"/>
    </location>
</feature>
<feature type="sequence conflict" description="In Ref. 4; AA sequence." evidence="12" ref="4">
    <original>T</original>
    <variation>S</variation>
    <location>
        <position position="446"/>
    </location>
</feature>
<feature type="sequence conflict" description="In Ref. 6; AAA30436." evidence="12" ref="6">
    <original>A</original>
    <variation>T</variation>
    <location>
        <position position="476"/>
    </location>
</feature>
<feature type="sequence conflict" description="In Ref. 4; AA sequence." evidence="12" ref="4">
    <original>P</original>
    <variation>V</variation>
    <location>
        <position position="478"/>
    </location>
</feature>
<feature type="sequence conflict" description="In Ref. 4; AA sequence." evidence="12" ref="4">
    <original>N</original>
    <variation>S</variation>
    <location>
        <position position="514"/>
    </location>
</feature>
<feature type="sequence conflict" description="In Ref. 6; AAA30436." evidence="12" ref="6">
    <original>P</original>
    <variation>S</variation>
    <location>
        <position position="518"/>
    </location>
</feature>
<feature type="sequence conflict" description="In Ref. 4; AA sequence." evidence="12" ref="4">
    <original>L</original>
    <variation>I</variation>
    <location>
        <position position="523"/>
    </location>
</feature>
<feature type="sequence conflict" description="In Ref. 4; AA sequence." evidence="12" ref="4">
    <original>A</original>
    <variation>P</variation>
    <location>
        <position position="529"/>
    </location>
</feature>
<feature type="sequence conflict" description="In Ref. 4; AA sequence." evidence="12" ref="4">
    <original>PSGLA</original>
    <variation>SPGAV</variation>
    <location>
        <begin position="535"/>
        <end position="539"/>
    </location>
</feature>
<feature type="sequence conflict" description="In Ref. 4; AA sequence." evidence="12" ref="4">
    <original>ANGDP</original>
    <variation>SPGEA</variation>
    <location>
        <begin position="544"/>
        <end position="548"/>
    </location>
</feature>
<feature type="sequence conflict" description="In Ref. 4; AA sequence." evidence="12" ref="4">
    <original>P</original>
    <variation>A</variation>
    <location>
        <position position="554"/>
    </location>
</feature>
<feature type="sequence conflict" description="In Ref. 4; AA sequence." evidence="12" ref="4">
    <original>R</original>
    <variation>K</variation>
    <location>
        <position position="560"/>
    </location>
</feature>
<feature type="sequence conflict" description="In Ref. 5; AA sequence." evidence="12" ref="5">
    <original>G</original>
    <variation>P</variation>
    <location>
        <position position="677"/>
    </location>
</feature>
<feature type="sequence conflict" description="In Ref. 7; AAD42347." evidence="12" ref="7">
    <original>S</original>
    <variation>A</variation>
    <location>
        <position position="712"/>
    </location>
</feature>
<feature type="sequence conflict" description="In Ref. 7; AAD42347." evidence="12" ref="7">
    <original>A</original>
    <variation>P</variation>
    <location>
        <position position="718"/>
    </location>
</feature>
<feature type="sequence conflict" description="In Ref. 7; AAD42347." evidence="12" ref="7">
    <original>A</original>
    <variation>S</variation>
    <location>
        <position position="734"/>
    </location>
</feature>
<feature type="sequence conflict" description="In Ref. 8; CAA26269." evidence="12" ref="8">
    <original>N</original>
    <variation>D</variation>
    <location>
        <position position="1372"/>
    </location>
</feature>